<reference key="1">
    <citation type="journal article" date="2004" name="Nucleic Acids Res.">
        <title>Unique features revealed by the genome sequence of Acinetobacter sp. ADP1, a versatile and naturally transformation competent bacterium.</title>
        <authorList>
            <person name="Barbe V."/>
            <person name="Vallenet D."/>
            <person name="Fonknechten N."/>
            <person name="Kreimeyer A."/>
            <person name="Oztas S."/>
            <person name="Labarre L."/>
            <person name="Cruveiller S."/>
            <person name="Robert C."/>
            <person name="Duprat S."/>
            <person name="Wincker P."/>
            <person name="Ornston L.N."/>
            <person name="Weissenbach J."/>
            <person name="Marliere P."/>
            <person name="Cohen G.N."/>
            <person name="Medigue C."/>
        </authorList>
    </citation>
    <scope>NUCLEOTIDE SEQUENCE [LARGE SCALE GENOMIC DNA]</scope>
    <source>
        <strain>ATCC 33305 / BD413 / ADP1</strain>
    </source>
</reference>
<comment type="function">
    <text evidence="1">One of the primary rRNA binding proteins, it binds directly to 16S rRNA where it nucleates assembly of the body of the 30S subunit.</text>
</comment>
<comment type="function">
    <text evidence="1">With S5 and S12 plays an important role in translational accuracy.</text>
</comment>
<comment type="subunit">
    <text evidence="1">Part of the 30S ribosomal subunit. Contacts protein S5. The interaction surface between S4 and S5 is involved in control of translational fidelity.</text>
</comment>
<comment type="similarity">
    <text evidence="1">Belongs to the universal ribosomal protein uS4 family.</text>
</comment>
<keyword id="KW-0687">Ribonucleoprotein</keyword>
<keyword id="KW-0689">Ribosomal protein</keyword>
<keyword id="KW-0694">RNA-binding</keyword>
<keyword id="KW-0699">rRNA-binding</keyword>
<proteinExistence type="inferred from homology"/>
<gene>
    <name evidence="1" type="primary">rpsD</name>
    <name type="ordered locus">ACIAD3195</name>
</gene>
<organism>
    <name type="scientific">Acinetobacter baylyi (strain ATCC 33305 / BD413 / ADP1)</name>
    <dbReference type="NCBI Taxonomy" id="62977"/>
    <lineage>
        <taxon>Bacteria</taxon>
        <taxon>Pseudomonadati</taxon>
        <taxon>Pseudomonadota</taxon>
        <taxon>Gammaproteobacteria</taxon>
        <taxon>Moraxellales</taxon>
        <taxon>Moraxellaceae</taxon>
        <taxon>Acinetobacter</taxon>
    </lineage>
</organism>
<name>RS4_ACIAD</name>
<sequence length="207" mass="23257">MARYIGPKCKLSRREGTDLQLKSGVKPFDVKTKKHAKAPGQHGQARGKQSEYSLQLREKQKVRRMYGVLERQFSNYYKEAARVKGATGENLLKLLESRLDNVVYRMGFGSTRAEARQLVSHRSITLNGRRVNIASIQVKAGDVIAVHEGAKQQLRIKNAIELAAQRGIPAWMDVDHSKLEGTFKAAPDRSDLPAEINESLIVELYSK</sequence>
<dbReference type="EMBL" id="CR543861">
    <property type="protein sequence ID" value="CAG69879.1"/>
    <property type="molecule type" value="Genomic_DNA"/>
</dbReference>
<dbReference type="RefSeq" id="WP_004924159.1">
    <property type="nucleotide sequence ID" value="NC_005966.1"/>
</dbReference>
<dbReference type="SMR" id="Q6F7T6"/>
<dbReference type="STRING" id="202950.GCA_001485005_02960"/>
<dbReference type="GeneID" id="45235410"/>
<dbReference type="KEGG" id="aci:ACIAD3195"/>
<dbReference type="eggNOG" id="COG0522">
    <property type="taxonomic scope" value="Bacteria"/>
</dbReference>
<dbReference type="HOGENOM" id="CLU_092403_0_2_6"/>
<dbReference type="OrthoDB" id="9803672at2"/>
<dbReference type="BioCyc" id="ASP62977:ACIAD_RS14475-MONOMER"/>
<dbReference type="Proteomes" id="UP000000430">
    <property type="component" value="Chromosome"/>
</dbReference>
<dbReference type="GO" id="GO:0015935">
    <property type="term" value="C:small ribosomal subunit"/>
    <property type="evidence" value="ECO:0007669"/>
    <property type="project" value="InterPro"/>
</dbReference>
<dbReference type="GO" id="GO:0019843">
    <property type="term" value="F:rRNA binding"/>
    <property type="evidence" value="ECO:0007669"/>
    <property type="project" value="UniProtKB-UniRule"/>
</dbReference>
<dbReference type="GO" id="GO:0003735">
    <property type="term" value="F:structural constituent of ribosome"/>
    <property type="evidence" value="ECO:0007669"/>
    <property type="project" value="InterPro"/>
</dbReference>
<dbReference type="GO" id="GO:0042274">
    <property type="term" value="P:ribosomal small subunit biogenesis"/>
    <property type="evidence" value="ECO:0007669"/>
    <property type="project" value="TreeGrafter"/>
</dbReference>
<dbReference type="GO" id="GO:0006412">
    <property type="term" value="P:translation"/>
    <property type="evidence" value="ECO:0007669"/>
    <property type="project" value="UniProtKB-UniRule"/>
</dbReference>
<dbReference type="CDD" id="cd00165">
    <property type="entry name" value="S4"/>
    <property type="match status" value="1"/>
</dbReference>
<dbReference type="FunFam" id="1.10.1050.10:FF:000001">
    <property type="entry name" value="30S ribosomal protein S4"/>
    <property type="match status" value="1"/>
</dbReference>
<dbReference type="FunFam" id="3.10.290.10:FF:000001">
    <property type="entry name" value="30S ribosomal protein S4"/>
    <property type="match status" value="1"/>
</dbReference>
<dbReference type="Gene3D" id="1.10.1050.10">
    <property type="entry name" value="Ribosomal Protein S4 Delta 41, Chain A, domain 1"/>
    <property type="match status" value="1"/>
</dbReference>
<dbReference type="Gene3D" id="3.10.290.10">
    <property type="entry name" value="RNA-binding S4 domain"/>
    <property type="match status" value="1"/>
</dbReference>
<dbReference type="HAMAP" id="MF_01306_B">
    <property type="entry name" value="Ribosomal_uS4_B"/>
    <property type="match status" value="1"/>
</dbReference>
<dbReference type="InterPro" id="IPR022801">
    <property type="entry name" value="Ribosomal_uS4"/>
</dbReference>
<dbReference type="InterPro" id="IPR005709">
    <property type="entry name" value="Ribosomal_uS4_bac-type"/>
</dbReference>
<dbReference type="InterPro" id="IPR018079">
    <property type="entry name" value="Ribosomal_uS4_CS"/>
</dbReference>
<dbReference type="InterPro" id="IPR001912">
    <property type="entry name" value="Ribosomal_uS4_N"/>
</dbReference>
<dbReference type="InterPro" id="IPR002942">
    <property type="entry name" value="S4_RNA-bd"/>
</dbReference>
<dbReference type="InterPro" id="IPR036986">
    <property type="entry name" value="S4_RNA-bd_sf"/>
</dbReference>
<dbReference type="NCBIfam" id="NF003717">
    <property type="entry name" value="PRK05327.1"/>
    <property type="match status" value="1"/>
</dbReference>
<dbReference type="NCBIfam" id="TIGR01017">
    <property type="entry name" value="rpsD_bact"/>
    <property type="match status" value="1"/>
</dbReference>
<dbReference type="PANTHER" id="PTHR11831">
    <property type="entry name" value="30S 40S RIBOSOMAL PROTEIN"/>
    <property type="match status" value="1"/>
</dbReference>
<dbReference type="PANTHER" id="PTHR11831:SF4">
    <property type="entry name" value="SMALL RIBOSOMAL SUBUNIT PROTEIN US4M"/>
    <property type="match status" value="1"/>
</dbReference>
<dbReference type="Pfam" id="PF00163">
    <property type="entry name" value="Ribosomal_S4"/>
    <property type="match status" value="1"/>
</dbReference>
<dbReference type="Pfam" id="PF01479">
    <property type="entry name" value="S4"/>
    <property type="match status" value="1"/>
</dbReference>
<dbReference type="SMART" id="SM01390">
    <property type="entry name" value="Ribosomal_S4"/>
    <property type="match status" value="1"/>
</dbReference>
<dbReference type="SMART" id="SM00363">
    <property type="entry name" value="S4"/>
    <property type="match status" value="1"/>
</dbReference>
<dbReference type="SUPFAM" id="SSF55174">
    <property type="entry name" value="Alpha-L RNA-binding motif"/>
    <property type="match status" value="1"/>
</dbReference>
<dbReference type="PROSITE" id="PS00632">
    <property type="entry name" value="RIBOSOMAL_S4"/>
    <property type="match status" value="1"/>
</dbReference>
<dbReference type="PROSITE" id="PS50889">
    <property type="entry name" value="S4"/>
    <property type="match status" value="1"/>
</dbReference>
<accession>Q6F7T6</accession>
<protein>
    <recommendedName>
        <fullName evidence="1">Small ribosomal subunit protein uS4</fullName>
    </recommendedName>
    <alternativeName>
        <fullName evidence="3">30S ribosomal protein S4</fullName>
    </alternativeName>
</protein>
<evidence type="ECO:0000255" key="1">
    <source>
        <dbReference type="HAMAP-Rule" id="MF_01306"/>
    </source>
</evidence>
<evidence type="ECO:0000256" key="2">
    <source>
        <dbReference type="SAM" id="MobiDB-lite"/>
    </source>
</evidence>
<evidence type="ECO:0000305" key="3"/>
<feature type="chain" id="PRO_0000132326" description="Small ribosomal subunit protein uS4">
    <location>
        <begin position="1"/>
        <end position="207"/>
    </location>
</feature>
<feature type="domain" description="S4 RNA-binding" evidence="1">
    <location>
        <begin position="97"/>
        <end position="159"/>
    </location>
</feature>
<feature type="region of interest" description="Disordered" evidence="2">
    <location>
        <begin position="26"/>
        <end position="53"/>
    </location>
</feature>